<gene>
    <name evidence="2" type="primary">infB</name>
    <name type="ordered locus">P9303_04131</name>
</gene>
<reference key="1">
    <citation type="journal article" date="2007" name="PLoS Genet.">
        <title>Patterns and implications of gene gain and loss in the evolution of Prochlorococcus.</title>
        <authorList>
            <person name="Kettler G.C."/>
            <person name="Martiny A.C."/>
            <person name="Huang K."/>
            <person name="Zucker J."/>
            <person name="Coleman M.L."/>
            <person name="Rodrigue S."/>
            <person name="Chen F."/>
            <person name="Lapidus A."/>
            <person name="Ferriera S."/>
            <person name="Johnson J."/>
            <person name="Steglich C."/>
            <person name="Church G.M."/>
            <person name="Richardson P."/>
            <person name="Chisholm S.W."/>
        </authorList>
    </citation>
    <scope>NUCLEOTIDE SEQUENCE [LARGE SCALE GENOMIC DNA]</scope>
    <source>
        <strain>MIT 9303</strain>
    </source>
</reference>
<proteinExistence type="inferred from homology"/>
<accession>A2C6Q5</accession>
<name>IF2_PROM3</name>
<dbReference type="EMBL" id="CP000554">
    <property type="protein sequence ID" value="ABM77165.1"/>
    <property type="molecule type" value="Genomic_DNA"/>
</dbReference>
<dbReference type="RefSeq" id="WP_011825090.1">
    <property type="nucleotide sequence ID" value="NC_008820.1"/>
</dbReference>
<dbReference type="SMR" id="A2C6Q5"/>
<dbReference type="STRING" id="59922.P9303_04131"/>
<dbReference type="KEGG" id="pmf:P9303_04131"/>
<dbReference type="HOGENOM" id="CLU_006301_5_1_3"/>
<dbReference type="BioCyc" id="PMAR59922:G1G80-384-MONOMER"/>
<dbReference type="Proteomes" id="UP000002274">
    <property type="component" value="Chromosome"/>
</dbReference>
<dbReference type="GO" id="GO:0005829">
    <property type="term" value="C:cytosol"/>
    <property type="evidence" value="ECO:0007669"/>
    <property type="project" value="TreeGrafter"/>
</dbReference>
<dbReference type="GO" id="GO:0005525">
    <property type="term" value="F:GTP binding"/>
    <property type="evidence" value="ECO:0007669"/>
    <property type="project" value="UniProtKB-KW"/>
</dbReference>
<dbReference type="GO" id="GO:0003924">
    <property type="term" value="F:GTPase activity"/>
    <property type="evidence" value="ECO:0007669"/>
    <property type="project" value="UniProtKB-UniRule"/>
</dbReference>
<dbReference type="GO" id="GO:0003743">
    <property type="term" value="F:translation initiation factor activity"/>
    <property type="evidence" value="ECO:0007669"/>
    <property type="project" value="UniProtKB-UniRule"/>
</dbReference>
<dbReference type="CDD" id="cd01887">
    <property type="entry name" value="IF2_eIF5B"/>
    <property type="match status" value="1"/>
</dbReference>
<dbReference type="CDD" id="cd03702">
    <property type="entry name" value="IF2_mtIF2_II"/>
    <property type="match status" value="1"/>
</dbReference>
<dbReference type="CDD" id="cd03692">
    <property type="entry name" value="mtIF2_IVc"/>
    <property type="match status" value="1"/>
</dbReference>
<dbReference type="FunFam" id="2.40.30.10:FF:000007">
    <property type="entry name" value="Translation initiation factor IF-2"/>
    <property type="match status" value="1"/>
</dbReference>
<dbReference type="FunFam" id="2.40.30.10:FF:000008">
    <property type="entry name" value="Translation initiation factor IF-2"/>
    <property type="match status" value="1"/>
</dbReference>
<dbReference type="FunFam" id="3.40.50.10050:FF:000001">
    <property type="entry name" value="Translation initiation factor IF-2"/>
    <property type="match status" value="1"/>
</dbReference>
<dbReference type="FunFam" id="3.40.50.300:FF:000019">
    <property type="entry name" value="Translation initiation factor IF-2"/>
    <property type="match status" value="1"/>
</dbReference>
<dbReference type="Gene3D" id="1.10.10.2480">
    <property type="match status" value="1"/>
</dbReference>
<dbReference type="Gene3D" id="3.40.50.300">
    <property type="entry name" value="P-loop containing nucleotide triphosphate hydrolases"/>
    <property type="match status" value="1"/>
</dbReference>
<dbReference type="Gene3D" id="2.40.30.10">
    <property type="entry name" value="Translation factors"/>
    <property type="match status" value="2"/>
</dbReference>
<dbReference type="Gene3D" id="3.40.50.10050">
    <property type="entry name" value="Translation initiation factor IF- 2, domain 3"/>
    <property type="match status" value="1"/>
</dbReference>
<dbReference type="HAMAP" id="MF_00100_B">
    <property type="entry name" value="IF_2_B"/>
    <property type="match status" value="1"/>
</dbReference>
<dbReference type="InterPro" id="IPR053905">
    <property type="entry name" value="EF-G-like_DII"/>
</dbReference>
<dbReference type="InterPro" id="IPR044145">
    <property type="entry name" value="IF2_II"/>
</dbReference>
<dbReference type="InterPro" id="IPR006847">
    <property type="entry name" value="IF2_N"/>
</dbReference>
<dbReference type="InterPro" id="IPR027417">
    <property type="entry name" value="P-loop_NTPase"/>
</dbReference>
<dbReference type="InterPro" id="IPR005225">
    <property type="entry name" value="Small_GTP-bd"/>
</dbReference>
<dbReference type="InterPro" id="IPR000795">
    <property type="entry name" value="T_Tr_GTP-bd_dom"/>
</dbReference>
<dbReference type="InterPro" id="IPR000178">
    <property type="entry name" value="TF_IF2_bacterial-like"/>
</dbReference>
<dbReference type="InterPro" id="IPR015760">
    <property type="entry name" value="TIF_IF2"/>
</dbReference>
<dbReference type="InterPro" id="IPR023115">
    <property type="entry name" value="TIF_IF2_dom3"/>
</dbReference>
<dbReference type="InterPro" id="IPR036925">
    <property type="entry name" value="TIF_IF2_dom3_sf"/>
</dbReference>
<dbReference type="InterPro" id="IPR009000">
    <property type="entry name" value="Transl_B-barrel_sf"/>
</dbReference>
<dbReference type="NCBIfam" id="TIGR00487">
    <property type="entry name" value="IF-2"/>
    <property type="match status" value="1"/>
</dbReference>
<dbReference type="NCBIfam" id="TIGR00231">
    <property type="entry name" value="small_GTP"/>
    <property type="match status" value="1"/>
</dbReference>
<dbReference type="PANTHER" id="PTHR43381:SF5">
    <property type="entry name" value="TR-TYPE G DOMAIN-CONTAINING PROTEIN"/>
    <property type="match status" value="1"/>
</dbReference>
<dbReference type="PANTHER" id="PTHR43381">
    <property type="entry name" value="TRANSLATION INITIATION FACTOR IF-2-RELATED"/>
    <property type="match status" value="1"/>
</dbReference>
<dbReference type="Pfam" id="PF22042">
    <property type="entry name" value="EF-G_D2"/>
    <property type="match status" value="1"/>
</dbReference>
<dbReference type="Pfam" id="PF00009">
    <property type="entry name" value="GTP_EFTU"/>
    <property type="match status" value="1"/>
</dbReference>
<dbReference type="Pfam" id="PF11987">
    <property type="entry name" value="IF-2"/>
    <property type="match status" value="1"/>
</dbReference>
<dbReference type="Pfam" id="PF04760">
    <property type="entry name" value="IF2_N"/>
    <property type="match status" value="2"/>
</dbReference>
<dbReference type="PRINTS" id="PR00315">
    <property type="entry name" value="ELONGATNFCT"/>
</dbReference>
<dbReference type="SUPFAM" id="SSF52156">
    <property type="entry name" value="Initiation factor IF2/eIF5b, domain 3"/>
    <property type="match status" value="1"/>
</dbReference>
<dbReference type="SUPFAM" id="SSF52540">
    <property type="entry name" value="P-loop containing nucleoside triphosphate hydrolases"/>
    <property type="match status" value="1"/>
</dbReference>
<dbReference type="SUPFAM" id="SSF50447">
    <property type="entry name" value="Translation proteins"/>
    <property type="match status" value="2"/>
</dbReference>
<dbReference type="PROSITE" id="PS51722">
    <property type="entry name" value="G_TR_2"/>
    <property type="match status" value="1"/>
</dbReference>
<dbReference type="PROSITE" id="PS01176">
    <property type="entry name" value="IF2"/>
    <property type="match status" value="1"/>
</dbReference>
<keyword id="KW-0963">Cytoplasm</keyword>
<keyword id="KW-0342">GTP-binding</keyword>
<keyword id="KW-0396">Initiation factor</keyword>
<keyword id="KW-0547">Nucleotide-binding</keyword>
<keyword id="KW-0648">Protein biosynthesis</keyword>
<evidence type="ECO:0000250" key="1"/>
<evidence type="ECO:0000255" key="2">
    <source>
        <dbReference type="HAMAP-Rule" id="MF_00100"/>
    </source>
</evidence>
<evidence type="ECO:0000256" key="3">
    <source>
        <dbReference type="SAM" id="MobiDB-lite"/>
    </source>
</evidence>
<protein>
    <recommendedName>
        <fullName evidence="2">Translation initiation factor IF-2</fullName>
    </recommendedName>
</protein>
<organism>
    <name type="scientific">Prochlorococcus marinus (strain MIT 9303)</name>
    <dbReference type="NCBI Taxonomy" id="59922"/>
    <lineage>
        <taxon>Bacteria</taxon>
        <taxon>Bacillati</taxon>
        <taxon>Cyanobacteriota</taxon>
        <taxon>Cyanophyceae</taxon>
        <taxon>Synechococcales</taxon>
        <taxon>Prochlorococcaceae</taxon>
        <taxon>Prochlorococcus</taxon>
    </lineage>
</organism>
<feature type="chain" id="PRO_1000008298" description="Translation initiation factor IF-2">
    <location>
        <begin position="1"/>
        <end position="1124"/>
    </location>
</feature>
<feature type="domain" description="tr-type G">
    <location>
        <begin position="615"/>
        <end position="787"/>
    </location>
</feature>
<feature type="region of interest" description="Disordered" evidence="3">
    <location>
        <begin position="32"/>
        <end position="451"/>
    </location>
</feature>
<feature type="region of interest" description="Disordered" evidence="3">
    <location>
        <begin position="480"/>
        <end position="523"/>
    </location>
</feature>
<feature type="region of interest" description="G1" evidence="1">
    <location>
        <begin position="624"/>
        <end position="631"/>
    </location>
</feature>
<feature type="region of interest" description="G2" evidence="1">
    <location>
        <begin position="649"/>
        <end position="653"/>
    </location>
</feature>
<feature type="region of interest" description="G3" evidence="1">
    <location>
        <begin position="674"/>
        <end position="677"/>
    </location>
</feature>
<feature type="region of interest" description="G4" evidence="1">
    <location>
        <begin position="728"/>
        <end position="731"/>
    </location>
</feature>
<feature type="region of interest" description="G5" evidence="1">
    <location>
        <begin position="764"/>
        <end position="766"/>
    </location>
</feature>
<feature type="compositionally biased region" description="Low complexity" evidence="3">
    <location>
        <begin position="32"/>
        <end position="41"/>
    </location>
</feature>
<feature type="compositionally biased region" description="Polar residues" evidence="3">
    <location>
        <begin position="94"/>
        <end position="104"/>
    </location>
</feature>
<feature type="compositionally biased region" description="Low complexity" evidence="3">
    <location>
        <begin position="134"/>
        <end position="173"/>
    </location>
</feature>
<feature type="compositionally biased region" description="Polar residues" evidence="3">
    <location>
        <begin position="192"/>
        <end position="203"/>
    </location>
</feature>
<feature type="compositionally biased region" description="Low complexity" evidence="3">
    <location>
        <begin position="214"/>
        <end position="227"/>
    </location>
</feature>
<feature type="compositionally biased region" description="Basic and acidic residues" evidence="3">
    <location>
        <begin position="235"/>
        <end position="246"/>
    </location>
</feature>
<feature type="compositionally biased region" description="Basic and acidic residues" evidence="3">
    <location>
        <begin position="261"/>
        <end position="272"/>
    </location>
</feature>
<feature type="compositionally biased region" description="Low complexity" evidence="3">
    <location>
        <begin position="274"/>
        <end position="283"/>
    </location>
</feature>
<feature type="compositionally biased region" description="Low complexity" evidence="3">
    <location>
        <begin position="411"/>
        <end position="422"/>
    </location>
</feature>
<feature type="compositionally biased region" description="Basic and acidic residues" evidence="3">
    <location>
        <begin position="425"/>
        <end position="439"/>
    </location>
</feature>
<feature type="compositionally biased region" description="Basic residues" evidence="3">
    <location>
        <begin position="484"/>
        <end position="493"/>
    </location>
</feature>
<feature type="compositionally biased region" description="Basic residues" evidence="3">
    <location>
        <begin position="500"/>
        <end position="514"/>
    </location>
</feature>
<feature type="binding site" evidence="2">
    <location>
        <begin position="624"/>
        <end position="631"/>
    </location>
    <ligand>
        <name>GTP</name>
        <dbReference type="ChEBI" id="CHEBI:37565"/>
    </ligand>
</feature>
<feature type="binding site" evidence="2">
    <location>
        <begin position="674"/>
        <end position="678"/>
    </location>
    <ligand>
        <name>GTP</name>
        <dbReference type="ChEBI" id="CHEBI:37565"/>
    </ligand>
</feature>
<feature type="binding site" evidence="2">
    <location>
        <begin position="728"/>
        <end position="731"/>
    </location>
    <ligand>
        <name>GTP</name>
        <dbReference type="ChEBI" id="CHEBI:37565"/>
    </ligand>
</feature>
<comment type="function">
    <text evidence="2">One of the essential components for the initiation of protein synthesis. Protects formylmethionyl-tRNA from spontaneous hydrolysis and promotes its binding to the 30S ribosomal subunits. Also involved in the hydrolysis of GTP during the formation of the 70S ribosomal complex.</text>
</comment>
<comment type="subcellular location">
    <subcellularLocation>
        <location evidence="2">Cytoplasm</location>
    </subcellularLocation>
</comment>
<comment type="similarity">
    <text evidence="2">Belongs to the TRAFAC class translation factor GTPase superfamily. Classic translation factor GTPase family. IF-2 subfamily.</text>
</comment>
<sequence length="1124" mass="119452">MTSSGKIRIYELSKDLGLENKDVLHAAEKLSIAAKSHSSSISDDEAKRIRGLLRQGSAANSAPPSKSEPGKTILSVKKAAPTAIKDVAPPMRKATSSSEISQVKPSAPANPTPTSPERLSRESVAHPAPPTRPVNPTTTPTSSPPKTAARPVNAPISRPATPSRPSAPTPRSANKPSSPVPPSTGSKDPRAGQTSTSSKATTVSGGGPRPKIISRPQSPAAPGRSAPPAKPSIPSDRKAPKPELVGRPKPKRPVVAPPSRPEPEGQRPDKKRPGISPRPIGGPNQRANTPQRPGAPIRQGKTRPGQPRSAGNTLELVGKPIRRDRSDAGSAGRDSNNRPGAPTRPGMPAGMRKPVAPGELMQLQKPTGRPGTPPPRRPDGTSVGTRGGSEGATPPVERPASPTAPKRPGHRPAQAPAAGAPRRPGRPDWDDSAKLEALRNKSPQKQRQKVHIIGENDDALTAETSGYAGEQQAVVLTASLARPAKPKSQKKPASKPVAALRKRKKETTRQRQRRRAMELRAAREAKQVRPEMLIVPEANLTVQELADMLSIESSEIIKSLFFKGITATVTQSLDLPTIEAVAEEFGVPVLQDDIEEAAKKTTEMIEETDLAHLIRRPPVVTVMGHVDHGKTSLLDAIRKARVAAVEAGGITQHIGAYQVEIDHGGQPRKITFLDTPGHQAFTAMRARGTKVTDIAVLVVAADDGVRPQTLEAISHARAAKVPIIVAINKTDKEGASPERVKQELSDQNLLSEEWGGDVVMVPVSAIKGENIDKLLEMILLVTEVEDLQANPDRLAKGTVIEAHLDKAKGPVATLLIQNGTLKTGDVLAAGPVLGKVRAMVDDSGARLKQAGPADAVEALGFSEVPTAGDEFEVYPDEKSARAVVGERASDARATRLAQQMASRRVSLAAMSGQASDGELKELNLILKADVQGSVEAILGSLEQLPKDEVQVRVLLSAPGEITETDVDLAAASGAVIVGFNTSMASGAKRAADATGVDVRDYDVIYKLLEDIQMAMEGLLEPELVEESLGEAEVRAVFTIGKSAVAGCYITTGKLQRNCRVRVRRAKQVVFEGDLDSLRRNKDDVKEVATGFECGIGCDRFANWEERDIIEAHKLVTKRRTLSSS</sequence>